<accession>Q43922</accession>
<reference key="1">
    <citation type="journal article" date="1995" name="J. Bacteriol.">
        <title>Unusual ancestry of dehydratases associated with quinate catabolism in Acinetobacter calcoaceticus.</title>
        <authorList>
            <person name="Elsemore D.A."/>
            <person name="Ornston L.N."/>
        </authorList>
    </citation>
    <scope>NUCLEOTIDE SEQUENCE [GENOMIC DNA]</scope>
    <scope>CHARACTERIZATION</scope>
</reference>
<reference key="2">
    <citation type="journal article" date="2004" name="Nucleic Acids Res.">
        <title>Unique features revealed by the genome sequence of Acinetobacter sp. ADP1, a versatile and naturally transformation competent bacterium.</title>
        <authorList>
            <person name="Barbe V."/>
            <person name="Vallenet D."/>
            <person name="Fonknechten N."/>
            <person name="Kreimeyer A."/>
            <person name="Oztas S."/>
            <person name="Labarre L."/>
            <person name="Cruveiller S."/>
            <person name="Robert C."/>
            <person name="Duprat S."/>
            <person name="Wincker P."/>
            <person name="Ornston L.N."/>
            <person name="Weissenbach J."/>
            <person name="Marliere P."/>
            <person name="Cohen G.N."/>
            <person name="Medigue C."/>
        </authorList>
    </citation>
    <scope>NUCLEOTIDE SEQUENCE [LARGE SCALE GENOMIC DNA]</scope>
    <source>
        <strain>ATCC 33305 / BD413 / ADP1</strain>
    </source>
</reference>
<organism>
    <name type="scientific">Acinetobacter baylyi (strain ATCC 33305 / BD413 / ADP1)</name>
    <dbReference type="NCBI Taxonomy" id="62977"/>
    <lineage>
        <taxon>Bacteria</taxon>
        <taxon>Pseudomonadati</taxon>
        <taxon>Pseudomonadota</taxon>
        <taxon>Gammaproteobacteria</taxon>
        <taxon>Moraxellales</taxon>
        <taxon>Moraxellaceae</taxon>
        <taxon>Acinetobacter</taxon>
    </lineage>
</organism>
<gene>
    <name type="primary">quiC</name>
    <name type="ordered locus">ACIAD1714</name>
</gene>
<dbReference type="EC" id="4.2.1.118"/>
<dbReference type="EMBL" id="L05770">
    <property type="protein sequence ID" value="AAC37159.1"/>
    <property type="molecule type" value="Genomic_DNA"/>
</dbReference>
<dbReference type="EMBL" id="CR543861">
    <property type="protein sequence ID" value="CAG68556.1"/>
    <property type="molecule type" value="Genomic_DNA"/>
</dbReference>
<dbReference type="PIR" id="I39523">
    <property type="entry name" value="I39523"/>
</dbReference>
<dbReference type="RefSeq" id="WP_004926650.1">
    <property type="nucleotide sequence ID" value="NC_005966.1"/>
</dbReference>
<dbReference type="SMR" id="Q43922"/>
<dbReference type="STRING" id="202950.GCA_001485005_03092"/>
<dbReference type="GeneID" id="45234101"/>
<dbReference type="KEGG" id="aci:ACIAD1714"/>
<dbReference type="eggNOG" id="COG3420">
    <property type="taxonomic scope" value="Bacteria"/>
</dbReference>
<dbReference type="HOGENOM" id="CLU_044040_0_0_6"/>
<dbReference type="OrthoDB" id="7178900at2"/>
<dbReference type="BioCyc" id="ASP62977:ACIAD_RS07900-MONOMER"/>
<dbReference type="BioCyc" id="MetaCyc:MONOMER-37"/>
<dbReference type="UniPathway" id="UPA00088">
    <property type="reaction ID" value="UER00179"/>
</dbReference>
<dbReference type="Proteomes" id="UP000000430">
    <property type="component" value="Chromosome"/>
</dbReference>
<dbReference type="GO" id="GO:0046565">
    <property type="term" value="F:3-dehydroshikimate dehydratase activity"/>
    <property type="evidence" value="ECO:0007669"/>
    <property type="project" value="UniProtKB-EC"/>
</dbReference>
<dbReference type="GO" id="GO:0046279">
    <property type="term" value="P:3,4-dihydroxybenzoate biosynthetic process"/>
    <property type="evidence" value="ECO:0007669"/>
    <property type="project" value="UniProtKB-UniPathway"/>
</dbReference>
<dbReference type="GO" id="GO:0019630">
    <property type="term" value="P:quinate metabolic process"/>
    <property type="evidence" value="ECO:0007669"/>
    <property type="project" value="UniProtKB-KW"/>
</dbReference>
<dbReference type="Gene3D" id="2.160.20.10">
    <property type="entry name" value="Single-stranded right-handed beta-helix, Pectin lyase-like"/>
    <property type="match status" value="1"/>
</dbReference>
<dbReference type="InterPro" id="IPR007742">
    <property type="entry name" value="NosD_dom"/>
</dbReference>
<dbReference type="InterPro" id="IPR006626">
    <property type="entry name" value="PbH1"/>
</dbReference>
<dbReference type="InterPro" id="IPR012334">
    <property type="entry name" value="Pectin_lyas_fold"/>
</dbReference>
<dbReference type="InterPro" id="IPR011050">
    <property type="entry name" value="Pectin_lyase_fold/virulence"/>
</dbReference>
<dbReference type="Pfam" id="PF05048">
    <property type="entry name" value="NosD"/>
    <property type="match status" value="1"/>
</dbReference>
<dbReference type="SMART" id="SM00710">
    <property type="entry name" value="PbH1"/>
    <property type="match status" value="7"/>
</dbReference>
<dbReference type="SUPFAM" id="SSF51126">
    <property type="entry name" value="Pectin lyase-like"/>
    <property type="match status" value="1"/>
</dbReference>
<sequence>MKLTSLRVSLLALGLVTSGFAAAETYTVDRYQDDSEKGSLRWAIEQSNANSAQENQILIQAVGKAPYVIKVDKPLPPIKSSVKIIGTEWDKTGEFIAIDGSNYIKGEGEKACPGANPGQYGTNVRTMTLPGLVLQDVNGVTLKGLDVHRFCIGVLVNRSSNNLIQHNRISNNYGGAGVMITGDDGKGNPTSTTTNNNKVLDNVFIDNGDGLELTRGAAFNLIANNLFTSTKANPEPSQGIEILWGNDNAVVGNKFENYSDGLQINWGKRNYIAYNELTNNSLGFNLTGDGNIFDSNKVHGNRIGIAIRSEKDANARITLTKNQIWDNGKDIKRCEAGGSCVPNQRLGAIVFGVPALEHEGFVGSRGGGVVIEPAKLQKTCTQPNQQNCNAIPNQGIQAPKLTVSKKQLTVEVKGTPNQRYNVEFFGNRNASSSEAEQYLGSIVVVTDHQGLAKANWAPKVSMPSVTANVTDHLGATSELSSAVKMR</sequence>
<comment type="function">
    <text>Converts dehydroshikimate to protocatechuate.</text>
</comment>
<comment type="catalytic activity">
    <reaction>
        <text>3-dehydroshikimate = 3,4-dihydroxybenzoate + H2O</text>
        <dbReference type="Rhea" id="RHEA:24848"/>
        <dbReference type="ChEBI" id="CHEBI:15377"/>
        <dbReference type="ChEBI" id="CHEBI:16630"/>
        <dbReference type="ChEBI" id="CHEBI:36241"/>
        <dbReference type="EC" id="4.2.1.118"/>
    </reaction>
</comment>
<comment type="pathway">
    <text>Aromatic compound metabolism; 3,4-dihydroxybenzoate biosynthesis; 3,4-dihydroxybenzoate from 3-dehydroquinate: step 2/2.</text>
</comment>
<feature type="chain" id="PRO_0000097137" description="3-dehydroshikimate dehydratase">
    <location>
        <begin position="1"/>
        <end position="486"/>
    </location>
</feature>
<name>QUIC_ACIAD</name>
<proteinExistence type="evidence at protein level"/>
<keyword id="KW-0456">Lyase</keyword>
<keyword id="KW-0672">Quinate metabolism</keyword>
<protein>
    <recommendedName>
        <fullName>3-dehydroshikimate dehydratase</fullName>
        <shortName>3-DHS dehydratase</shortName>
        <shortName>DHSase</shortName>
        <ecNumber>4.2.1.118</ecNumber>
    </recommendedName>
</protein>